<evidence type="ECO:0000255" key="1">
    <source>
        <dbReference type="HAMAP-Rule" id="MF_01307"/>
    </source>
</evidence>
<evidence type="ECO:0000305" key="2"/>
<evidence type="ECO:0007829" key="3">
    <source>
        <dbReference type="PDB" id="7BGD"/>
    </source>
</evidence>
<evidence type="ECO:0007829" key="4">
    <source>
        <dbReference type="PDB" id="8BYV"/>
    </source>
</evidence>
<sequence>MARREEETKEFEERVVTINRVAKVVKGGRRFRFTALVVVGDKNGRVGFGTGKAQEVPEAIKKAVEAAKKDLVVVPRVEGTTPHTITGRYGSGSVFMKPAAPGTGVIAGGPVRAVLELAGITDILSKSLGSNTPINMVRATIDGLQNLKNAEDVAKLRGKTVEELYN</sequence>
<organism>
    <name type="scientific">Staphylococcus aureus (strain NCTC 8325 / PS 47)</name>
    <dbReference type="NCBI Taxonomy" id="93061"/>
    <lineage>
        <taxon>Bacteria</taxon>
        <taxon>Bacillati</taxon>
        <taxon>Bacillota</taxon>
        <taxon>Bacilli</taxon>
        <taxon>Bacillales</taxon>
        <taxon>Staphylococcaceae</taxon>
        <taxon>Staphylococcus</taxon>
    </lineage>
</organism>
<name>RS5_STAA8</name>
<gene>
    <name evidence="1" type="primary">rpsE</name>
    <name type="ordered locus">SAOUHSC_02494</name>
</gene>
<feature type="chain" id="PRO_1000086063" description="Small ribosomal subunit protein uS5">
    <location>
        <begin position="1"/>
        <end position="166"/>
    </location>
</feature>
<feature type="domain" description="S5 DRBM" evidence="1">
    <location>
        <begin position="11"/>
        <end position="74"/>
    </location>
</feature>
<feature type="strand" evidence="4">
    <location>
        <begin position="12"/>
        <end position="21"/>
    </location>
</feature>
<feature type="strand" evidence="4">
    <location>
        <begin position="32"/>
        <end position="40"/>
    </location>
</feature>
<feature type="strand" evidence="4">
    <location>
        <begin position="42"/>
        <end position="55"/>
    </location>
</feature>
<feature type="helix" evidence="4">
    <location>
        <begin position="56"/>
        <end position="69"/>
    </location>
</feature>
<feature type="strand" evidence="3">
    <location>
        <begin position="77"/>
        <end position="80"/>
    </location>
</feature>
<feature type="strand" evidence="4">
    <location>
        <begin position="85"/>
        <end position="89"/>
    </location>
</feature>
<feature type="strand" evidence="4">
    <location>
        <begin position="92"/>
        <end position="98"/>
    </location>
</feature>
<feature type="strand" evidence="3">
    <location>
        <begin position="101"/>
        <end position="103"/>
    </location>
</feature>
<feature type="helix" evidence="4">
    <location>
        <begin position="109"/>
        <end position="117"/>
    </location>
</feature>
<feature type="strand" evidence="4">
    <location>
        <begin position="122"/>
        <end position="129"/>
    </location>
</feature>
<feature type="helix" evidence="4">
    <location>
        <begin position="133"/>
        <end position="145"/>
    </location>
</feature>
<feature type="helix" evidence="4">
    <location>
        <begin position="150"/>
        <end position="156"/>
    </location>
</feature>
<feature type="strand" evidence="3">
    <location>
        <begin position="157"/>
        <end position="159"/>
    </location>
</feature>
<feature type="turn" evidence="4">
    <location>
        <begin position="161"/>
        <end position="163"/>
    </location>
</feature>
<proteinExistence type="evidence at protein level"/>
<dbReference type="EMBL" id="CP000253">
    <property type="protein sequence ID" value="ABD31513.1"/>
    <property type="molecule type" value="Genomic_DNA"/>
</dbReference>
<dbReference type="RefSeq" id="WP_000113851.1">
    <property type="nucleotide sequence ID" value="NZ_LS483365.1"/>
</dbReference>
<dbReference type="RefSeq" id="YP_500962.1">
    <property type="nucleotide sequence ID" value="NC_007795.1"/>
</dbReference>
<dbReference type="PDB" id="5LI0">
    <property type="method" value="EM"/>
    <property type="resolution" value="3.80 A"/>
    <property type="chains" value="e=2-166"/>
</dbReference>
<dbReference type="PDB" id="5ND8">
    <property type="method" value="EM"/>
    <property type="resolution" value="3.70 A"/>
    <property type="chains" value="e=1-166"/>
</dbReference>
<dbReference type="PDB" id="5ND9">
    <property type="method" value="EM"/>
    <property type="resolution" value="3.70 A"/>
    <property type="chains" value="e=1-166"/>
</dbReference>
<dbReference type="PDB" id="5TCU">
    <property type="method" value="EM"/>
    <property type="resolution" value="3.90 A"/>
    <property type="chains" value="SD=10-165"/>
</dbReference>
<dbReference type="PDB" id="6YEF">
    <property type="method" value="EM"/>
    <property type="resolution" value="3.20 A"/>
    <property type="chains" value="e=1-166"/>
</dbReference>
<dbReference type="PDB" id="7BGD">
    <property type="method" value="EM"/>
    <property type="resolution" value="3.20 A"/>
    <property type="chains" value="e=1-166"/>
</dbReference>
<dbReference type="PDB" id="7KWG">
    <property type="method" value="EM"/>
    <property type="resolution" value="3.75 A"/>
    <property type="chains" value="e=1-166"/>
</dbReference>
<dbReference type="PDB" id="7NHL">
    <property type="method" value="EM"/>
    <property type="resolution" value="3.10 A"/>
    <property type="chains" value="f=1-166"/>
</dbReference>
<dbReference type="PDB" id="7NHM">
    <property type="method" value="EM"/>
    <property type="resolution" value="3.10 A"/>
    <property type="chains" value="f=1-166"/>
</dbReference>
<dbReference type="PDB" id="8BH6">
    <property type="method" value="EM"/>
    <property type="resolution" value="3.70 A"/>
    <property type="chains" value="e=1-166"/>
</dbReference>
<dbReference type="PDB" id="8BH7">
    <property type="method" value="EM"/>
    <property type="resolution" value="4.23 A"/>
    <property type="chains" value="e=1-166"/>
</dbReference>
<dbReference type="PDB" id="8BYV">
    <property type="method" value="EM"/>
    <property type="resolution" value="2.89 A"/>
    <property type="chains" value="e=1-166"/>
</dbReference>
<dbReference type="PDB" id="8P2F">
    <property type="method" value="EM"/>
    <property type="resolution" value="2.44 A"/>
    <property type="chains" value="f=1-166"/>
</dbReference>
<dbReference type="PDB" id="8P2G">
    <property type="method" value="EM"/>
    <property type="resolution" value="2.02 A"/>
    <property type="chains" value="f=1-166"/>
</dbReference>
<dbReference type="PDB" id="8P2H">
    <property type="method" value="EM"/>
    <property type="resolution" value="2.49 A"/>
    <property type="chains" value="f=1-166"/>
</dbReference>
<dbReference type="PDBsum" id="5LI0"/>
<dbReference type="PDBsum" id="5ND8"/>
<dbReference type="PDBsum" id="5ND9"/>
<dbReference type="PDBsum" id="5TCU"/>
<dbReference type="PDBsum" id="6YEF"/>
<dbReference type="PDBsum" id="7BGD"/>
<dbReference type="PDBsum" id="7KWG"/>
<dbReference type="PDBsum" id="7NHL"/>
<dbReference type="PDBsum" id="7NHM"/>
<dbReference type="PDBsum" id="8BH6"/>
<dbReference type="PDBsum" id="8BH7"/>
<dbReference type="PDBsum" id="8BYV"/>
<dbReference type="PDBsum" id="8P2F"/>
<dbReference type="PDBsum" id="8P2G"/>
<dbReference type="PDBsum" id="8P2H"/>
<dbReference type="EMDB" id="EMD-10791"/>
<dbReference type="EMDB" id="EMD-12178"/>
<dbReference type="EMDB" id="EMD-12332"/>
<dbReference type="EMDB" id="EMD-12333"/>
<dbReference type="EMDB" id="EMD-16048"/>
<dbReference type="EMDB" id="EMD-16049"/>
<dbReference type="EMDB" id="EMD-16334"/>
<dbReference type="EMDB" id="EMD-17363"/>
<dbReference type="EMDB" id="EMD-17364"/>
<dbReference type="EMDB" id="EMD-17365"/>
<dbReference type="EMDB" id="EMD-23052"/>
<dbReference type="EMDB" id="EMD-3624"/>
<dbReference type="EMDB" id="EMD-3625"/>
<dbReference type="EMDB" id="EMD-4050"/>
<dbReference type="EMDB" id="EMD-8402"/>
<dbReference type="SMR" id="Q2FW23"/>
<dbReference type="IntAct" id="Q2FW23">
    <property type="interactions" value="1"/>
</dbReference>
<dbReference type="STRING" id="93061.SAOUHSC_02494"/>
<dbReference type="PaxDb" id="1280-SAXN108_2483"/>
<dbReference type="GeneID" id="3920871"/>
<dbReference type="KEGG" id="sao:SAOUHSC_02494"/>
<dbReference type="PATRIC" id="fig|93061.5.peg.2250"/>
<dbReference type="eggNOG" id="COG0098">
    <property type="taxonomic scope" value="Bacteria"/>
</dbReference>
<dbReference type="HOGENOM" id="CLU_065898_2_2_9"/>
<dbReference type="OrthoDB" id="9809045at2"/>
<dbReference type="PRO" id="PR:Q2FW23"/>
<dbReference type="Proteomes" id="UP000008816">
    <property type="component" value="Chromosome"/>
</dbReference>
<dbReference type="GO" id="GO:0022627">
    <property type="term" value="C:cytosolic small ribosomal subunit"/>
    <property type="evidence" value="ECO:0000318"/>
    <property type="project" value="GO_Central"/>
</dbReference>
<dbReference type="GO" id="GO:0019843">
    <property type="term" value="F:rRNA binding"/>
    <property type="evidence" value="ECO:0007669"/>
    <property type="project" value="UniProtKB-UniRule"/>
</dbReference>
<dbReference type="GO" id="GO:0003735">
    <property type="term" value="F:structural constituent of ribosome"/>
    <property type="evidence" value="ECO:0000318"/>
    <property type="project" value="GO_Central"/>
</dbReference>
<dbReference type="GO" id="GO:0006412">
    <property type="term" value="P:translation"/>
    <property type="evidence" value="ECO:0000318"/>
    <property type="project" value="GO_Central"/>
</dbReference>
<dbReference type="FunFam" id="3.30.160.20:FF:000001">
    <property type="entry name" value="30S ribosomal protein S5"/>
    <property type="match status" value="1"/>
</dbReference>
<dbReference type="FunFam" id="3.30.230.10:FF:000002">
    <property type="entry name" value="30S ribosomal protein S5"/>
    <property type="match status" value="1"/>
</dbReference>
<dbReference type="Gene3D" id="3.30.160.20">
    <property type="match status" value="1"/>
</dbReference>
<dbReference type="Gene3D" id="3.30.230.10">
    <property type="match status" value="1"/>
</dbReference>
<dbReference type="HAMAP" id="MF_01307_B">
    <property type="entry name" value="Ribosomal_uS5_B"/>
    <property type="match status" value="1"/>
</dbReference>
<dbReference type="InterPro" id="IPR020568">
    <property type="entry name" value="Ribosomal_Su5_D2-typ_SF"/>
</dbReference>
<dbReference type="InterPro" id="IPR000851">
    <property type="entry name" value="Ribosomal_uS5"/>
</dbReference>
<dbReference type="InterPro" id="IPR005712">
    <property type="entry name" value="Ribosomal_uS5_bac-type"/>
</dbReference>
<dbReference type="InterPro" id="IPR005324">
    <property type="entry name" value="Ribosomal_uS5_C"/>
</dbReference>
<dbReference type="InterPro" id="IPR013810">
    <property type="entry name" value="Ribosomal_uS5_N"/>
</dbReference>
<dbReference type="InterPro" id="IPR018192">
    <property type="entry name" value="Ribosomal_uS5_N_CS"/>
</dbReference>
<dbReference type="InterPro" id="IPR014721">
    <property type="entry name" value="Ribsml_uS5_D2-typ_fold_subgr"/>
</dbReference>
<dbReference type="NCBIfam" id="TIGR01021">
    <property type="entry name" value="rpsE_bact"/>
    <property type="match status" value="1"/>
</dbReference>
<dbReference type="PANTHER" id="PTHR48277">
    <property type="entry name" value="MITOCHONDRIAL RIBOSOMAL PROTEIN S5"/>
    <property type="match status" value="1"/>
</dbReference>
<dbReference type="PANTHER" id="PTHR48277:SF1">
    <property type="entry name" value="MITOCHONDRIAL RIBOSOMAL PROTEIN S5"/>
    <property type="match status" value="1"/>
</dbReference>
<dbReference type="Pfam" id="PF00333">
    <property type="entry name" value="Ribosomal_S5"/>
    <property type="match status" value="1"/>
</dbReference>
<dbReference type="Pfam" id="PF03719">
    <property type="entry name" value="Ribosomal_S5_C"/>
    <property type="match status" value="1"/>
</dbReference>
<dbReference type="SUPFAM" id="SSF54768">
    <property type="entry name" value="dsRNA-binding domain-like"/>
    <property type="match status" value="1"/>
</dbReference>
<dbReference type="SUPFAM" id="SSF54211">
    <property type="entry name" value="Ribosomal protein S5 domain 2-like"/>
    <property type="match status" value="1"/>
</dbReference>
<dbReference type="PROSITE" id="PS00585">
    <property type="entry name" value="RIBOSOMAL_S5"/>
    <property type="match status" value="1"/>
</dbReference>
<dbReference type="PROSITE" id="PS50881">
    <property type="entry name" value="S5_DSRBD"/>
    <property type="match status" value="1"/>
</dbReference>
<comment type="function">
    <text evidence="1">With S4 and S12 plays an important role in translational accuracy.</text>
</comment>
<comment type="function">
    <text evidence="1">Located at the back of the 30S subunit body where it stabilizes the conformation of the head with respect to the body.</text>
</comment>
<comment type="subunit">
    <text evidence="1">Part of the 30S ribosomal subunit. Contacts proteins S4 and S8.</text>
</comment>
<comment type="domain">
    <text>The N-terminal domain interacts with the head of the 30S subunit; the C-terminal domain interacts with the body and contacts protein S4. The interaction surface between S4 and S5 is involved in control of translational fidelity.</text>
</comment>
<comment type="similarity">
    <text evidence="1">Belongs to the universal ribosomal protein uS5 family.</text>
</comment>
<keyword id="KW-0002">3D-structure</keyword>
<keyword id="KW-1185">Reference proteome</keyword>
<keyword id="KW-0687">Ribonucleoprotein</keyword>
<keyword id="KW-0689">Ribosomal protein</keyword>
<keyword id="KW-0694">RNA-binding</keyword>
<keyword id="KW-0699">rRNA-binding</keyword>
<protein>
    <recommendedName>
        <fullName evidence="1">Small ribosomal subunit protein uS5</fullName>
    </recommendedName>
    <alternativeName>
        <fullName evidence="2">30S ribosomal protein S5</fullName>
    </alternativeName>
</protein>
<accession>Q2FW23</accession>
<reference key="1">
    <citation type="book" date="2006" name="Gram positive pathogens, 2nd edition">
        <title>The Staphylococcus aureus NCTC 8325 genome.</title>
        <editorList>
            <person name="Fischetti V."/>
            <person name="Novick R."/>
            <person name="Ferretti J."/>
            <person name="Portnoy D."/>
            <person name="Rood J."/>
        </editorList>
        <authorList>
            <person name="Gillaspy A.F."/>
            <person name="Worrell V."/>
            <person name="Orvis J."/>
            <person name="Roe B.A."/>
            <person name="Dyer D.W."/>
            <person name="Iandolo J.J."/>
        </authorList>
    </citation>
    <scope>NUCLEOTIDE SEQUENCE [LARGE SCALE GENOMIC DNA]</scope>
    <source>
        <strain>NCTC 8325 / PS 47</strain>
    </source>
</reference>